<accession>Q66CP5</accession>
<dbReference type="EMBL" id="BX936398">
    <property type="protein sequence ID" value="CAH20597.1"/>
    <property type="molecule type" value="Genomic_DNA"/>
</dbReference>
<dbReference type="RefSeq" id="WP_002208766.1">
    <property type="nucleotide sequence ID" value="NZ_CP009712.1"/>
</dbReference>
<dbReference type="SMR" id="Q66CP5"/>
<dbReference type="KEGG" id="ypo:BZ17_1162"/>
<dbReference type="KEGG" id="yps:YPTB1357"/>
<dbReference type="PATRIC" id="fig|273123.14.peg.1239"/>
<dbReference type="Proteomes" id="UP000001011">
    <property type="component" value="Chromosome"/>
</dbReference>
<dbReference type="GO" id="GO:0005886">
    <property type="term" value="C:plasma membrane"/>
    <property type="evidence" value="ECO:0007669"/>
    <property type="project" value="UniProtKB-SubCell"/>
</dbReference>
<dbReference type="GO" id="GO:0008324">
    <property type="term" value="F:monoatomic cation transmembrane transporter activity"/>
    <property type="evidence" value="ECO:0007669"/>
    <property type="project" value="InterPro"/>
</dbReference>
<dbReference type="GO" id="GO:0006813">
    <property type="term" value="P:potassium ion transport"/>
    <property type="evidence" value="ECO:0007669"/>
    <property type="project" value="InterPro"/>
</dbReference>
<dbReference type="FunFam" id="3.30.70.1450:FF:000003">
    <property type="entry name" value="Putative transport protein YbjL"/>
    <property type="match status" value="1"/>
</dbReference>
<dbReference type="Gene3D" id="3.30.70.1450">
    <property type="entry name" value="Regulator of K+ conductance, C-terminal domain"/>
    <property type="match status" value="2"/>
</dbReference>
<dbReference type="HAMAP" id="MF_01015">
    <property type="entry name" value="YbjL"/>
    <property type="match status" value="1"/>
</dbReference>
<dbReference type="InterPro" id="IPR050144">
    <property type="entry name" value="AAE_transporter"/>
</dbReference>
<dbReference type="InterPro" id="IPR006037">
    <property type="entry name" value="RCK_C"/>
</dbReference>
<dbReference type="InterPro" id="IPR036721">
    <property type="entry name" value="RCK_C_sf"/>
</dbReference>
<dbReference type="InterPro" id="IPR023017">
    <property type="entry name" value="Transp_YbjL_put"/>
</dbReference>
<dbReference type="InterPro" id="IPR006512">
    <property type="entry name" value="YidE_YbjL"/>
</dbReference>
<dbReference type="NCBIfam" id="NF003440">
    <property type="entry name" value="PRK04972.1"/>
    <property type="match status" value="1"/>
</dbReference>
<dbReference type="NCBIfam" id="TIGR01625">
    <property type="entry name" value="YidE_YbjL_dupl"/>
    <property type="match status" value="2"/>
</dbReference>
<dbReference type="PANTHER" id="PTHR30445">
    <property type="entry name" value="K(+)_H(+) ANTIPORTER SUBUNIT KHTT"/>
    <property type="match status" value="1"/>
</dbReference>
<dbReference type="PANTHER" id="PTHR30445:SF10">
    <property type="entry name" value="TRANSPORT PROTEIN YBJL-RELATED"/>
    <property type="match status" value="1"/>
</dbReference>
<dbReference type="Pfam" id="PF06826">
    <property type="entry name" value="Asp-Al_Ex"/>
    <property type="match status" value="2"/>
</dbReference>
<dbReference type="Pfam" id="PF02080">
    <property type="entry name" value="TrkA_C"/>
    <property type="match status" value="2"/>
</dbReference>
<dbReference type="SUPFAM" id="SSF116726">
    <property type="entry name" value="TrkA C-terminal domain-like"/>
    <property type="match status" value="2"/>
</dbReference>
<dbReference type="PROSITE" id="PS51202">
    <property type="entry name" value="RCK_C"/>
    <property type="match status" value="2"/>
</dbReference>
<keyword id="KW-1003">Cell membrane</keyword>
<keyword id="KW-0472">Membrane</keyword>
<keyword id="KW-0677">Repeat</keyword>
<keyword id="KW-0812">Transmembrane</keyword>
<keyword id="KW-1133">Transmembrane helix</keyword>
<keyword id="KW-0813">Transport</keyword>
<feature type="chain" id="PRO_0000208796" description="Putative transport protein YPTB1357">
    <location>
        <begin position="1"/>
        <end position="562"/>
    </location>
</feature>
<feature type="transmembrane region" description="Helical" evidence="1">
    <location>
        <begin position="8"/>
        <end position="28"/>
    </location>
</feature>
<feature type="transmembrane region" description="Helical" evidence="1">
    <location>
        <begin position="37"/>
        <end position="57"/>
    </location>
</feature>
<feature type="transmembrane region" description="Helical" evidence="1">
    <location>
        <begin position="66"/>
        <end position="86"/>
    </location>
</feature>
<feature type="transmembrane region" description="Helical" evidence="1">
    <location>
        <begin position="94"/>
        <end position="114"/>
    </location>
</feature>
<feature type="transmembrane region" description="Helical" evidence="1">
    <location>
        <begin position="118"/>
        <end position="138"/>
    </location>
</feature>
<feature type="transmembrane region" description="Helical" evidence="1">
    <location>
        <begin position="158"/>
        <end position="178"/>
    </location>
</feature>
<feature type="transmembrane region" description="Helical" evidence="1">
    <location>
        <begin position="383"/>
        <end position="403"/>
    </location>
</feature>
<feature type="transmembrane region" description="Helical" evidence="1">
    <location>
        <begin position="406"/>
        <end position="426"/>
    </location>
</feature>
<feature type="transmembrane region" description="Helical" evidence="1">
    <location>
        <begin position="447"/>
        <end position="467"/>
    </location>
</feature>
<feature type="transmembrane region" description="Helical" evidence="1">
    <location>
        <begin position="475"/>
        <end position="495"/>
    </location>
</feature>
<feature type="transmembrane region" description="Helical" evidence="1">
    <location>
        <begin position="541"/>
        <end position="561"/>
    </location>
</feature>
<feature type="domain" description="RCK C-terminal 1" evidence="1">
    <location>
        <begin position="202"/>
        <end position="288"/>
    </location>
</feature>
<feature type="domain" description="RCK C-terminal 2" evidence="1">
    <location>
        <begin position="290"/>
        <end position="373"/>
    </location>
</feature>
<name>Y1357_YERPS</name>
<protein>
    <recommendedName>
        <fullName evidence="1">Putative transport protein YPTB1357</fullName>
    </recommendedName>
</protein>
<reference key="1">
    <citation type="journal article" date="2004" name="Proc. Natl. Acad. Sci. U.S.A.">
        <title>Insights into the evolution of Yersinia pestis through whole-genome comparison with Yersinia pseudotuberculosis.</title>
        <authorList>
            <person name="Chain P.S.G."/>
            <person name="Carniel E."/>
            <person name="Larimer F.W."/>
            <person name="Lamerdin J."/>
            <person name="Stoutland P.O."/>
            <person name="Regala W.M."/>
            <person name="Georgescu A.M."/>
            <person name="Vergez L.M."/>
            <person name="Land M.L."/>
            <person name="Motin V.L."/>
            <person name="Brubaker R.R."/>
            <person name="Fowler J."/>
            <person name="Hinnebusch J."/>
            <person name="Marceau M."/>
            <person name="Medigue C."/>
            <person name="Simonet M."/>
            <person name="Chenal-Francisque V."/>
            <person name="Souza B."/>
            <person name="Dacheux D."/>
            <person name="Elliott J.M."/>
            <person name="Derbise A."/>
            <person name="Hauser L.J."/>
            <person name="Garcia E."/>
        </authorList>
    </citation>
    <scope>NUCLEOTIDE SEQUENCE [LARGE SCALE GENOMIC DNA]</scope>
    <source>
        <strain>IP32953</strain>
    </source>
</reference>
<comment type="subcellular location">
    <subcellularLocation>
        <location evidence="1">Cell membrane</location>
        <topology evidence="1">Multi-pass membrane protein</topology>
    </subcellularLocation>
</comment>
<comment type="similarity">
    <text evidence="1">Belongs to the AAE transporter (TC 2.A.81) family. YbjL subfamily.</text>
</comment>
<proteinExistence type="inferred from homology"/>
<sequence>MNINVANLLNGNYILLLFVVLALGLCLGKLRLGSIQLGNAIGVLVVSLLLGQQHFAINTEALNLGFMLFIFCVGVEAGPNFFSIFFRDGKNYLMLALVMVGSAMILALGLGKLFGWDIGLTAGMLAGSMTSTPVLVGAGDTLRHTMANGSSLQQAQDNLSLGYALTYLIGLVSLILGARYLPKLQHQDLPTSAQQIARERGLDTDSQRKVYLPVIRAYRVGPELVAWADGKNLRELGIYRQTGCYIERIRRNGILANPDGDAVLQVGDEISLVGYPDAHSRLDPSFRNGKEVFDRDLLDMRIVTEEIVVKNSNAVGKRLSHLKLTDHGCFLNRVIRSQIEMPIDDNVVLNKGDVLQVSGDARRVKSVAEKIGFISIHSQVTDLLAFCSFFILGLMIGLITFQFSNFSFGIGNAAGLLLAGIMLGFLRANHPTFGYIPQGALNMVKEFGLMVFMAGVGLSAGGGINSSLGAVGGQMLISGLIVSLVPVVICFVFGAYVLRMNRALLFGAIMGARTCAPAMDIISDTARSNIPALGYAGTYAIANVLLTLAGSLIVILWPGILG</sequence>
<evidence type="ECO:0000255" key="1">
    <source>
        <dbReference type="HAMAP-Rule" id="MF_01015"/>
    </source>
</evidence>
<organism>
    <name type="scientific">Yersinia pseudotuberculosis serotype I (strain IP32953)</name>
    <dbReference type="NCBI Taxonomy" id="273123"/>
    <lineage>
        <taxon>Bacteria</taxon>
        <taxon>Pseudomonadati</taxon>
        <taxon>Pseudomonadota</taxon>
        <taxon>Gammaproteobacteria</taxon>
        <taxon>Enterobacterales</taxon>
        <taxon>Yersiniaceae</taxon>
        <taxon>Yersinia</taxon>
    </lineage>
</organism>
<gene>
    <name type="ordered locus">YPTB1357</name>
</gene>